<accession>Q1KVR0</accession>
<name>RK16_TETOB</name>
<organism>
    <name type="scientific">Tetradesmus obliquus</name>
    <name type="common">Green alga</name>
    <name type="synonym">Acutodesmus obliquus</name>
    <dbReference type="NCBI Taxonomy" id="3088"/>
    <lineage>
        <taxon>Eukaryota</taxon>
        <taxon>Viridiplantae</taxon>
        <taxon>Chlorophyta</taxon>
        <taxon>core chlorophytes</taxon>
        <taxon>Chlorophyceae</taxon>
        <taxon>CS clade</taxon>
        <taxon>Sphaeropleales</taxon>
        <taxon>Scenedesmaceae</taxon>
        <taxon>Tetradesmus</taxon>
    </lineage>
</organism>
<comment type="subunit">
    <text evidence="1">Part of the 50S ribosomal subunit.</text>
</comment>
<comment type="subcellular location">
    <subcellularLocation>
        <location>Plastid</location>
        <location>Chloroplast</location>
    </subcellularLocation>
</comment>
<comment type="similarity">
    <text evidence="1">Belongs to the universal ribosomal protein uL16 family.</text>
</comment>
<dbReference type="EMBL" id="DQ396875">
    <property type="protein sequence ID" value="ABD48297.1"/>
    <property type="molecule type" value="Genomic_DNA"/>
</dbReference>
<dbReference type="RefSeq" id="YP_636014.1">
    <property type="nucleotide sequence ID" value="NC_008101.1"/>
</dbReference>
<dbReference type="SMR" id="Q1KVR0"/>
<dbReference type="GeneID" id="4099847"/>
<dbReference type="GO" id="GO:0009507">
    <property type="term" value="C:chloroplast"/>
    <property type="evidence" value="ECO:0007669"/>
    <property type="project" value="UniProtKB-SubCell"/>
</dbReference>
<dbReference type="GO" id="GO:0005762">
    <property type="term" value="C:mitochondrial large ribosomal subunit"/>
    <property type="evidence" value="ECO:0007669"/>
    <property type="project" value="TreeGrafter"/>
</dbReference>
<dbReference type="GO" id="GO:0019843">
    <property type="term" value="F:rRNA binding"/>
    <property type="evidence" value="ECO:0007669"/>
    <property type="project" value="InterPro"/>
</dbReference>
<dbReference type="GO" id="GO:0003735">
    <property type="term" value="F:structural constituent of ribosome"/>
    <property type="evidence" value="ECO:0007669"/>
    <property type="project" value="InterPro"/>
</dbReference>
<dbReference type="GO" id="GO:0032543">
    <property type="term" value="P:mitochondrial translation"/>
    <property type="evidence" value="ECO:0007669"/>
    <property type="project" value="TreeGrafter"/>
</dbReference>
<dbReference type="CDD" id="cd01433">
    <property type="entry name" value="Ribosomal_L16_L10e"/>
    <property type="match status" value="1"/>
</dbReference>
<dbReference type="FunFam" id="3.90.1170.10:FF:000001">
    <property type="entry name" value="50S ribosomal protein L16"/>
    <property type="match status" value="1"/>
</dbReference>
<dbReference type="Gene3D" id="3.90.1170.10">
    <property type="entry name" value="Ribosomal protein L10e/L16"/>
    <property type="match status" value="1"/>
</dbReference>
<dbReference type="HAMAP" id="MF_01342">
    <property type="entry name" value="Ribosomal_uL16"/>
    <property type="match status" value="1"/>
</dbReference>
<dbReference type="InterPro" id="IPR047873">
    <property type="entry name" value="Ribosomal_uL16"/>
</dbReference>
<dbReference type="InterPro" id="IPR000114">
    <property type="entry name" value="Ribosomal_uL16_bact-type"/>
</dbReference>
<dbReference type="InterPro" id="IPR020798">
    <property type="entry name" value="Ribosomal_uL16_CS"/>
</dbReference>
<dbReference type="InterPro" id="IPR016180">
    <property type="entry name" value="Ribosomal_uL16_dom"/>
</dbReference>
<dbReference type="InterPro" id="IPR036920">
    <property type="entry name" value="Ribosomal_uL16_sf"/>
</dbReference>
<dbReference type="NCBIfam" id="TIGR01164">
    <property type="entry name" value="rplP_bact"/>
    <property type="match status" value="1"/>
</dbReference>
<dbReference type="PANTHER" id="PTHR12220">
    <property type="entry name" value="50S/60S RIBOSOMAL PROTEIN L16"/>
    <property type="match status" value="1"/>
</dbReference>
<dbReference type="PANTHER" id="PTHR12220:SF13">
    <property type="entry name" value="LARGE RIBOSOMAL SUBUNIT PROTEIN UL16M"/>
    <property type="match status" value="1"/>
</dbReference>
<dbReference type="Pfam" id="PF00252">
    <property type="entry name" value="Ribosomal_L16"/>
    <property type="match status" value="1"/>
</dbReference>
<dbReference type="PRINTS" id="PR00060">
    <property type="entry name" value="RIBOSOMALL16"/>
</dbReference>
<dbReference type="SUPFAM" id="SSF54686">
    <property type="entry name" value="Ribosomal protein L16p/L10e"/>
    <property type="match status" value="1"/>
</dbReference>
<dbReference type="PROSITE" id="PS00586">
    <property type="entry name" value="RIBOSOMAL_L16_1"/>
    <property type="match status" value="1"/>
</dbReference>
<dbReference type="PROSITE" id="PS00701">
    <property type="entry name" value="RIBOSOMAL_L16_2"/>
    <property type="match status" value="1"/>
</dbReference>
<gene>
    <name evidence="1" type="primary">rpl16</name>
</gene>
<sequence>MLSPKRTKFRRPHRGNLKGKACRGTKIAFGEYGLQALEPCWITSRQIESGRRVLTRYVRRTGKLWIRIFPDKPITMRPAGTRMGSGKGFPEYWVAVVHPGKILYEIQGVSEPVAKQALKTAAYKMPIKTKFVKVESNP</sequence>
<geneLocation type="chloroplast"/>
<proteinExistence type="inferred from homology"/>
<evidence type="ECO:0000255" key="1">
    <source>
        <dbReference type="HAMAP-Rule" id="MF_01342"/>
    </source>
</evidence>
<evidence type="ECO:0000305" key="2"/>
<keyword id="KW-0150">Chloroplast</keyword>
<keyword id="KW-0934">Plastid</keyword>
<keyword id="KW-0687">Ribonucleoprotein</keyword>
<keyword id="KW-0689">Ribosomal protein</keyword>
<feature type="chain" id="PRO_0000251699" description="Large ribosomal subunit protein uL16c">
    <location>
        <begin position="1"/>
        <end position="138"/>
    </location>
</feature>
<protein>
    <recommendedName>
        <fullName evidence="1">Large ribosomal subunit protein uL16c</fullName>
    </recommendedName>
    <alternativeName>
        <fullName evidence="2">50S ribosomal protein L16, chloroplastic</fullName>
    </alternativeName>
</protein>
<reference key="1">
    <citation type="journal article" date="2006" name="BMC Evol. Biol.">
        <title>The complete chloroplast genome sequence of the chlorophycean green alga Scenedesmus obliquus reveals a compact gene organization and a biased distribution of genes on the two DNA strands.</title>
        <authorList>
            <person name="de Cambiaire J.-C."/>
            <person name="Otis C."/>
            <person name="Lemieux C."/>
            <person name="Turmel M."/>
        </authorList>
    </citation>
    <scope>NUCLEOTIDE SEQUENCE [LARGE SCALE GENOMIC DNA]</scope>
    <source>
        <strain>UTEX 393</strain>
    </source>
</reference>